<feature type="chain" id="PRO_0000172010" description="Putative pre-16S rRNA nuclease">
    <location>
        <begin position="1"/>
        <end position="157"/>
    </location>
</feature>
<evidence type="ECO:0000255" key="1">
    <source>
        <dbReference type="HAMAP-Rule" id="MF_00651"/>
    </source>
</evidence>
<evidence type="ECO:0000305" key="2"/>
<sequence>MLCDSIESFFGALGADRRILGLDFGEKKFGLAVSDSTGTIAMPHSVYLRRNVRQDLGELNAILKREGICAAVVGLPLQLDGMEGEMCAVVRSFVQKLIKKSGVYVYLHDERFTTAMASRTTESLGLRRKASQKVDDKISAALILQQVLDMAKGRGII</sequence>
<reference key="1">
    <citation type="journal article" date="2005" name="Proc. Natl. Acad. Sci. U.S.A.">
        <title>Complete genome sequencing of Anaplasma marginale reveals that the surface is skewed to two superfamilies of outer membrane proteins.</title>
        <authorList>
            <person name="Brayton K.A."/>
            <person name="Kappmeyer L.S."/>
            <person name="Herndon D.R."/>
            <person name="Dark M.J."/>
            <person name="Tibbals D.L."/>
            <person name="Palmer G.H."/>
            <person name="McGuire T.C."/>
            <person name="Knowles D.P. Jr."/>
        </authorList>
    </citation>
    <scope>NUCLEOTIDE SEQUENCE [LARGE SCALE GENOMIC DNA]</scope>
    <source>
        <strain>St. Maries</strain>
    </source>
</reference>
<keyword id="KW-0963">Cytoplasm</keyword>
<keyword id="KW-0378">Hydrolase</keyword>
<keyword id="KW-0540">Nuclease</keyword>
<keyword id="KW-0690">Ribosome biogenesis</keyword>
<proteinExistence type="inferred from homology"/>
<protein>
    <recommendedName>
        <fullName evidence="1">Putative pre-16S rRNA nuclease</fullName>
        <ecNumber evidence="1">3.1.-.-</ecNumber>
    </recommendedName>
</protein>
<gene>
    <name type="ordered locus">AM859</name>
</gene>
<dbReference type="EC" id="3.1.-.-" evidence="1"/>
<dbReference type="EMBL" id="CP000030">
    <property type="protein sequence ID" value="AAV86774.1"/>
    <property type="status" value="ALT_INIT"/>
    <property type="molecule type" value="Genomic_DNA"/>
</dbReference>
<dbReference type="SMR" id="Q5PAA6"/>
<dbReference type="KEGG" id="ama:AM859"/>
<dbReference type="PATRIC" id="fig|320483.3.peg.737"/>
<dbReference type="HOGENOM" id="CLU_098240_2_2_5"/>
<dbReference type="GO" id="GO:0005829">
    <property type="term" value="C:cytosol"/>
    <property type="evidence" value="ECO:0007669"/>
    <property type="project" value="TreeGrafter"/>
</dbReference>
<dbReference type="GO" id="GO:0004518">
    <property type="term" value="F:nuclease activity"/>
    <property type="evidence" value="ECO:0007669"/>
    <property type="project" value="UniProtKB-KW"/>
</dbReference>
<dbReference type="GO" id="GO:0000967">
    <property type="term" value="P:rRNA 5'-end processing"/>
    <property type="evidence" value="ECO:0007669"/>
    <property type="project" value="UniProtKB-UniRule"/>
</dbReference>
<dbReference type="CDD" id="cd16964">
    <property type="entry name" value="YqgF"/>
    <property type="match status" value="1"/>
</dbReference>
<dbReference type="Gene3D" id="3.30.420.140">
    <property type="entry name" value="YqgF/RNase H-like domain"/>
    <property type="match status" value="1"/>
</dbReference>
<dbReference type="HAMAP" id="MF_00651">
    <property type="entry name" value="Nuclease_YqgF"/>
    <property type="match status" value="1"/>
</dbReference>
<dbReference type="InterPro" id="IPR012337">
    <property type="entry name" value="RNaseH-like_sf"/>
</dbReference>
<dbReference type="InterPro" id="IPR005227">
    <property type="entry name" value="YqgF"/>
</dbReference>
<dbReference type="InterPro" id="IPR006641">
    <property type="entry name" value="YqgF/RNaseH-like_dom"/>
</dbReference>
<dbReference type="InterPro" id="IPR037027">
    <property type="entry name" value="YqgF/RNaseH-like_dom_sf"/>
</dbReference>
<dbReference type="NCBIfam" id="TIGR00250">
    <property type="entry name" value="RNAse_H_YqgF"/>
    <property type="match status" value="1"/>
</dbReference>
<dbReference type="PANTHER" id="PTHR33317">
    <property type="entry name" value="POLYNUCLEOTIDYL TRANSFERASE, RIBONUCLEASE H-LIKE SUPERFAMILY PROTEIN"/>
    <property type="match status" value="1"/>
</dbReference>
<dbReference type="PANTHER" id="PTHR33317:SF4">
    <property type="entry name" value="POLYNUCLEOTIDYL TRANSFERASE, RIBONUCLEASE H-LIKE SUPERFAMILY PROTEIN"/>
    <property type="match status" value="1"/>
</dbReference>
<dbReference type="Pfam" id="PF03652">
    <property type="entry name" value="RuvX"/>
    <property type="match status" value="1"/>
</dbReference>
<dbReference type="SMART" id="SM00732">
    <property type="entry name" value="YqgFc"/>
    <property type="match status" value="1"/>
</dbReference>
<dbReference type="SUPFAM" id="SSF53098">
    <property type="entry name" value="Ribonuclease H-like"/>
    <property type="match status" value="1"/>
</dbReference>
<accession>Q5PAA6</accession>
<comment type="function">
    <text evidence="1">Could be a nuclease involved in processing of the 5'-end of pre-16S rRNA.</text>
</comment>
<comment type="subcellular location">
    <subcellularLocation>
        <location evidence="1">Cytoplasm</location>
    </subcellularLocation>
</comment>
<comment type="similarity">
    <text evidence="1">Belongs to the YqgF nuclease family.</text>
</comment>
<comment type="sequence caution" evidence="2">
    <conflict type="erroneous initiation">
        <sequence resource="EMBL-CDS" id="AAV86774"/>
    </conflict>
    <text>Extended N-terminus.</text>
</comment>
<organism>
    <name type="scientific">Anaplasma marginale (strain St. Maries)</name>
    <dbReference type="NCBI Taxonomy" id="234826"/>
    <lineage>
        <taxon>Bacteria</taxon>
        <taxon>Pseudomonadati</taxon>
        <taxon>Pseudomonadota</taxon>
        <taxon>Alphaproteobacteria</taxon>
        <taxon>Rickettsiales</taxon>
        <taxon>Anaplasmataceae</taxon>
        <taxon>Anaplasma</taxon>
    </lineage>
</organism>
<name>YQGF_ANAMM</name>